<proteinExistence type="evidence at protein level"/>
<name>CWHA_ACHLY</name>
<organism>
    <name type="scientific">Achromobacter lyticus</name>
    <dbReference type="NCBI Taxonomy" id="224"/>
    <lineage>
        <taxon>Bacteria</taxon>
        <taxon>Pseudomonadati</taxon>
        <taxon>Pseudomonadota</taxon>
        <taxon>Betaproteobacteria</taxon>
        <taxon>Burkholderiales</taxon>
        <taxon>Alcaligenaceae</taxon>
        <taxon>Achromobacter</taxon>
    </lineage>
</organism>
<comment type="function">
    <text evidence="2">Antibacterial activity against Gram-positive bacteria M.luteus, S.aureus, E.faecalis and P.acidilactici and Gram-negative bacterium E.coli.</text>
</comment>
<comment type="catalytic activity">
    <reaction>
        <text>Hydrolyzes the link between N-acetylmuramoyl residues and L-amino acid residues in certain cell-wall glycopeptides.</text>
        <dbReference type="EC" id="3.5.1.28"/>
    </reaction>
</comment>
<comment type="biophysicochemical properties">
    <phDependence>
        <text>Optimum pH is 8.5.</text>
    </phDependence>
</comment>
<comment type="subcellular location">
    <subcellularLocation>
        <location>Secreted</location>
    </subcellularLocation>
</comment>
<comment type="mass spectrometry"/>
<feature type="chain" id="PRO_0000079618" description="N-acetylmuramoyl-L-alanine amidase A">
    <location>
        <begin position="1"/>
        <end position="177"/>
    </location>
</feature>
<feature type="domain" description="N-acetylmuramoyl-L-alanine amidase" evidence="1">
    <location>
        <begin position="23"/>
        <end position="158"/>
    </location>
</feature>
<feature type="disulfide bond" evidence="2">
    <location>
        <begin position="114"/>
        <end position="121"/>
    </location>
</feature>
<keyword id="KW-0044">Antibiotic</keyword>
<keyword id="KW-0929">Antimicrobial</keyword>
<keyword id="KW-0961">Cell wall biogenesis/degradation</keyword>
<keyword id="KW-0903">Direct protein sequencing</keyword>
<keyword id="KW-1015">Disulfide bond</keyword>
<keyword id="KW-0378">Hydrolase</keyword>
<keyword id="KW-0964">Secreted</keyword>
<sequence>AVDFGEAIWNPASSSNYSTASNQTSAVIMHTMEGSYAGSISWFQNPSAQVSAHYLIRKSDGQITQMVREYHQAWHAKNHNYYTIGIEHDGRAADAGNWSAAMVNASARLTKSICARRGVNCASAWKGPGYDTFHLVPDSVRVKGHGMLSGNENRYDPGKYFPWSNYYNLINGGGGNP</sequence>
<protein>
    <recommendedName>
        <fullName>N-acetylmuramoyl-L-alanine amidase A</fullName>
        <ecNumber>3.5.1.28</ecNumber>
    </recommendedName>
</protein>
<accession>P81717</accession>
<gene>
    <name type="primary">cwhA</name>
</gene>
<reference key="1">
    <citation type="journal article" date="2000" name="J. Biochem.">
        <title>Purification, characterization, and primary structure of a novel cell wall hydrolytic amidase, CwhA, from Achromobacter lyticus.</title>
        <authorList>
            <person name="Li S."/>
            <person name="Norioka S."/>
            <person name="Sakiyama F."/>
        </authorList>
    </citation>
    <scope>PROTEIN SEQUENCE</scope>
    <scope>FUNCTION</scope>
    <scope>MASS SPECTROMETRY</scope>
    <scope>DISULFIDE BOND</scope>
    <source>
        <strain>M497-1</strain>
    </source>
</reference>
<evidence type="ECO:0000255" key="1"/>
<evidence type="ECO:0000269" key="2">
    <source>
    </source>
</evidence>
<dbReference type="EC" id="3.5.1.28"/>
<dbReference type="PIR" id="JC7276">
    <property type="entry name" value="JC7276"/>
</dbReference>
<dbReference type="SMR" id="P81717"/>
<dbReference type="BRENDA" id="3.5.1.28">
    <property type="organism ID" value="74"/>
</dbReference>
<dbReference type="GO" id="GO:0005576">
    <property type="term" value="C:extracellular region"/>
    <property type="evidence" value="ECO:0007669"/>
    <property type="project" value="UniProtKB-SubCell"/>
</dbReference>
<dbReference type="GO" id="GO:0008745">
    <property type="term" value="F:N-acetylmuramoyl-L-alanine amidase activity"/>
    <property type="evidence" value="ECO:0007669"/>
    <property type="project" value="UniProtKB-EC"/>
</dbReference>
<dbReference type="GO" id="GO:0071555">
    <property type="term" value="P:cell wall organization"/>
    <property type="evidence" value="ECO:0007669"/>
    <property type="project" value="UniProtKB-KW"/>
</dbReference>
<dbReference type="GO" id="GO:0042742">
    <property type="term" value="P:defense response to bacterium"/>
    <property type="evidence" value="ECO:0007669"/>
    <property type="project" value="UniProtKB-KW"/>
</dbReference>
<dbReference type="GO" id="GO:0009253">
    <property type="term" value="P:peptidoglycan catabolic process"/>
    <property type="evidence" value="ECO:0007669"/>
    <property type="project" value="InterPro"/>
</dbReference>
<dbReference type="GO" id="GO:0009254">
    <property type="term" value="P:peptidoglycan turnover"/>
    <property type="evidence" value="ECO:0007669"/>
    <property type="project" value="TreeGrafter"/>
</dbReference>
<dbReference type="CDD" id="cd06583">
    <property type="entry name" value="PGRP"/>
    <property type="match status" value="1"/>
</dbReference>
<dbReference type="Gene3D" id="3.40.80.10">
    <property type="entry name" value="Peptidoglycan recognition protein-like"/>
    <property type="match status" value="1"/>
</dbReference>
<dbReference type="InterPro" id="IPR036505">
    <property type="entry name" value="Amidase/PGRP_sf"/>
</dbReference>
<dbReference type="InterPro" id="IPR002502">
    <property type="entry name" value="Amidase_domain"/>
</dbReference>
<dbReference type="InterPro" id="IPR051206">
    <property type="entry name" value="NAMLAA_amidase_2"/>
</dbReference>
<dbReference type="PANTHER" id="PTHR30417">
    <property type="entry name" value="N-ACETYLMURAMOYL-L-ALANINE AMIDASE AMID"/>
    <property type="match status" value="1"/>
</dbReference>
<dbReference type="PANTHER" id="PTHR30417:SF1">
    <property type="entry name" value="N-ACETYLMURAMOYL-L-ALANINE AMIDASE AMID"/>
    <property type="match status" value="1"/>
</dbReference>
<dbReference type="Pfam" id="PF01510">
    <property type="entry name" value="Amidase_2"/>
    <property type="match status" value="1"/>
</dbReference>
<dbReference type="SMART" id="SM00644">
    <property type="entry name" value="Ami_2"/>
    <property type="match status" value="1"/>
</dbReference>
<dbReference type="SUPFAM" id="SSF55846">
    <property type="entry name" value="N-acetylmuramoyl-L-alanine amidase-like"/>
    <property type="match status" value="1"/>
</dbReference>